<protein>
    <recommendedName>
        <fullName evidence="1">Flap endonuclease Xni</fullName>
        <shortName evidence="1">FEN</shortName>
        <ecNumber evidence="1">3.1.-.-</ecNumber>
    </recommendedName>
</protein>
<proteinExistence type="inferred from homology"/>
<accession>A4Y4Y4</accession>
<organism>
    <name type="scientific">Shewanella putrefaciens (strain CN-32 / ATCC BAA-453)</name>
    <dbReference type="NCBI Taxonomy" id="319224"/>
    <lineage>
        <taxon>Bacteria</taxon>
        <taxon>Pseudomonadati</taxon>
        <taxon>Pseudomonadota</taxon>
        <taxon>Gammaproteobacteria</taxon>
        <taxon>Alteromonadales</taxon>
        <taxon>Shewanellaceae</taxon>
        <taxon>Shewanella</taxon>
    </lineage>
</organism>
<sequence>MNKFLIIDGLNLVRRIYAAIPDENDMESLKERVTSACTKLLRVHHPSHIAIVWDGDEISWRKQLYPDYKKGRKPMPEPLAQGLRALQEHLATLNIASIYAAAEADDVIATLAVKTAKAQGEAIIVSTDKGFSQLNHPRITQWDHFNQQYLDIAALEQKLGVDRSQFLDLMALAGDSGNKIPGIAGIGPKSAAELLKTFRTLSTLFSSLPNLGAKQAKKLAEGKEMARLSYKLAQLQTDLPLNINLKDFRANSTPHPAPNIEQ</sequence>
<reference key="1">
    <citation type="submission" date="2007-04" db="EMBL/GenBank/DDBJ databases">
        <title>Complete sequence of Shewanella putrefaciens CN-32.</title>
        <authorList>
            <consortium name="US DOE Joint Genome Institute"/>
            <person name="Copeland A."/>
            <person name="Lucas S."/>
            <person name="Lapidus A."/>
            <person name="Barry K."/>
            <person name="Detter J.C."/>
            <person name="Glavina del Rio T."/>
            <person name="Hammon N."/>
            <person name="Israni S."/>
            <person name="Dalin E."/>
            <person name="Tice H."/>
            <person name="Pitluck S."/>
            <person name="Chain P."/>
            <person name="Malfatti S."/>
            <person name="Shin M."/>
            <person name="Vergez L."/>
            <person name="Schmutz J."/>
            <person name="Larimer F."/>
            <person name="Land M."/>
            <person name="Hauser L."/>
            <person name="Kyrpides N."/>
            <person name="Mikhailova N."/>
            <person name="Romine M.F."/>
            <person name="Fredrickson J."/>
            <person name="Tiedje J."/>
            <person name="Richardson P."/>
        </authorList>
    </citation>
    <scope>NUCLEOTIDE SEQUENCE [LARGE SCALE GENOMIC DNA]</scope>
    <source>
        <strain>CN-32 / ATCC BAA-453</strain>
    </source>
</reference>
<keyword id="KW-0238">DNA-binding</keyword>
<keyword id="KW-0255">Endonuclease</keyword>
<keyword id="KW-0378">Hydrolase</keyword>
<keyword id="KW-0460">Magnesium</keyword>
<keyword id="KW-0479">Metal-binding</keyword>
<keyword id="KW-0540">Nuclease</keyword>
<keyword id="KW-0630">Potassium</keyword>
<name>XNI_SHEPC</name>
<feature type="chain" id="PRO_1000065885" description="Flap endonuclease Xni">
    <location>
        <begin position="1"/>
        <end position="262"/>
    </location>
</feature>
<feature type="domain" description="5'-3' exonuclease" evidence="1">
    <location>
        <begin position="164"/>
        <end position="251"/>
    </location>
</feature>
<feature type="region of interest" description="Interaction with DNA" evidence="1">
    <location>
        <begin position="185"/>
        <end position="190"/>
    </location>
</feature>
<feature type="binding site" evidence="1">
    <location>
        <position position="105"/>
    </location>
    <ligand>
        <name>Mg(2+)</name>
        <dbReference type="ChEBI" id="CHEBI:18420"/>
    </ligand>
</feature>
<feature type="binding site" evidence="1">
    <location>
        <position position="172"/>
    </location>
    <ligand>
        <name>K(+)</name>
        <dbReference type="ChEBI" id="CHEBI:29103"/>
    </ligand>
</feature>
<feature type="binding site" evidence="1">
    <location>
        <position position="173"/>
    </location>
    <ligand>
        <name>K(+)</name>
        <dbReference type="ChEBI" id="CHEBI:29103"/>
    </ligand>
</feature>
<feature type="binding site" evidence="1">
    <location>
        <position position="181"/>
    </location>
    <ligand>
        <name>K(+)</name>
        <dbReference type="ChEBI" id="CHEBI:29103"/>
    </ligand>
</feature>
<feature type="binding site" evidence="1">
    <location>
        <position position="183"/>
    </location>
    <ligand>
        <name>K(+)</name>
        <dbReference type="ChEBI" id="CHEBI:29103"/>
    </ligand>
</feature>
<feature type="binding site" evidence="1">
    <location>
        <position position="186"/>
    </location>
    <ligand>
        <name>K(+)</name>
        <dbReference type="ChEBI" id="CHEBI:29103"/>
    </ligand>
</feature>
<evidence type="ECO:0000255" key="1">
    <source>
        <dbReference type="HAMAP-Rule" id="MF_01192"/>
    </source>
</evidence>
<comment type="function">
    <text evidence="1">Has flap endonuclease activity. During DNA replication, flap endonucleases cleave the 5'-overhanging flap structure that is generated by displacement synthesis when DNA polymerase encounters the 5'-end of a downstream Okazaki fragment.</text>
</comment>
<comment type="cofactor">
    <cofactor evidence="1">
        <name>Mg(2+)</name>
        <dbReference type="ChEBI" id="CHEBI:18420"/>
    </cofactor>
    <text evidence="1">Binds 2 Mg(2+) per subunit. Only one magnesium ion has a direct interaction with the protein, the other interactions are indirect.</text>
</comment>
<comment type="cofactor">
    <cofactor evidence="1">
        <name>K(+)</name>
        <dbReference type="ChEBI" id="CHEBI:29103"/>
    </cofactor>
    <text evidence="1">Binds 1 K(+) per subunit. The potassium ion strongly increases the affinity for DNA.</text>
</comment>
<comment type="similarity">
    <text evidence="1">Belongs to the Xni family.</text>
</comment>
<gene>
    <name evidence="1" type="primary">xni</name>
    <name evidence="1" type="synonym">ygdG</name>
    <name type="ordered locus">Sputcn32_1289</name>
</gene>
<dbReference type="EC" id="3.1.-.-" evidence="1"/>
<dbReference type="EMBL" id="CP000681">
    <property type="protein sequence ID" value="ABP75017.1"/>
    <property type="molecule type" value="Genomic_DNA"/>
</dbReference>
<dbReference type="SMR" id="A4Y4Y4"/>
<dbReference type="STRING" id="319224.Sputcn32_1289"/>
<dbReference type="KEGG" id="spc:Sputcn32_1289"/>
<dbReference type="eggNOG" id="COG0258">
    <property type="taxonomic scope" value="Bacteria"/>
</dbReference>
<dbReference type="HOGENOM" id="CLU_004675_1_2_6"/>
<dbReference type="GO" id="GO:0008409">
    <property type="term" value="F:5'-3' exonuclease activity"/>
    <property type="evidence" value="ECO:0007669"/>
    <property type="project" value="InterPro"/>
</dbReference>
<dbReference type="GO" id="GO:0017108">
    <property type="term" value="F:5'-flap endonuclease activity"/>
    <property type="evidence" value="ECO:0007669"/>
    <property type="project" value="UniProtKB-UniRule"/>
</dbReference>
<dbReference type="GO" id="GO:0003677">
    <property type="term" value="F:DNA binding"/>
    <property type="evidence" value="ECO:0007669"/>
    <property type="project" value="UniProtKB-UniRule"/>
</dbReference>
<dbReference type="GO" id="GO:0000287">
    <property type="term" value="F:magnesium ion binding"/>
    <property type="evidence" value="ECO:0007669"/>
    <property type="project" value="UniProtKB-UniRule"/>
</dbReference>
<dbReference type="GO" id="GO:0030955">
    <property type="term" value="F:potassium ion binding"/>
    <property type="evidence" value="ECO:0007669"/>
    <property type="project" value="UniProtKB-UniRule"/>
</dbReference>
<dbReference type="GO" id="GO:0033567">
    <property type="term" value="P:DNA replication, Okazaki fragment processing"/>
    <property type="evidence" value="ECO:0007669"/>
    <property type="project" value="UniProtKB-UniRule"/>
</dbReference>
<dbReference type="CDD" id="cd09898">
    <property type="entry name" value="H3TH_53EXO"/>
    <property type="match status" value="1"/>
</dbReference>
<dbReference type="CDD" id="cd09859">
    <property type="entry name" value="PIN_53EXO"/>
    <property type="match status" value="1"/>
</dbReference>
<dbReference type="FunFam" id="1.10.150.20:FF:000003">
    <property type="entry name" value="DNA polymerase I"/>
    <property type="match status" value="1"/>
</dbReference>
<dbReference type="Gene3D" id="1.10.150.20">
    <property type="entry name" value="5' to 3' exonuclease, C-terminal subdomain"/>
    <property type="match status" value="1"/>
</dbReference>
<dbReference type="Gene3D" id="3.40.50.1010">
    <property type="entry name" value="5'-nuclease"/>
    <property type="match status" value="1"/>
</dbReference>
<dbReference type="HAMAP" id="MF_01192">
    <property type="entry name" value="Xni"/>
    <property type="match status" value="1"/>
</dbReference>
<dbReference type="InterPro" id="IPR020046">
    <property type="entry name" value="5-3_exonucl_a-hlix_arch_N"/>
</dbReference>
<dbReference type="InterPro" id="IPR002421">
    <property type="entry name" value="5-3_exonuclease"/>
</dbReference>
<dbReference type="InterPro" id="IPR036279">
    <property type="entry name" value="5-3_exonuclease_C_sf"/>
</dbReference>
<dbReference type="InterPro" id="IPR020045">
    <property type="entry name" value="DNA_polI_H3TH"/>
</dbReference>
<dbReference type="InterPro" id="IPR038969">
    <property type="entry name" value="FEN"/>
</dbReference>
<dbReference type="InterPro" id="IPR008918">
    <property type="entry name" value="HhH2"/>
</dbReference>
<dbReference type="InterPro" id="IPR029060">
    <property type="entry name" value="PIN-like_dom_sf"/>
</dbReference>
<dbReference type="InterPro" id="IPR022895">
    <property type="entry name" value="Xni"/>
</dbReference>
<dbReference type="NCBIfam" id="NF007017">
    <property type="entry name" value="PRK09482.1"/>
    <property type="match status" value="1"/>
</dbReference>
<dbReference type="PANTHER" id="PTHR42646:SF2">
    <property type="entry name" value="5'-3' EXONUCLEASE FAMILY PROTEIN"/>
    <property type="match status" value="1"/>
</dbReference>
<dbReference type="PANTHER" id="PTHR42646">
    <property type="entry name" value="FLAP ENDONUCLEASE XNI"/>
    <property type="match status" value="1"/>
</dbReference>
<dbReference type="Pfam" id="PF01367">
    <property type="entry name" value="5_3_exonuc"/>
    <property type="match status" value="1"/>
</dbReference>
<dbReference type="Pfam" id="PF02739">
    <property type="entry name" value="5_3_exonuc_N"/>
    <property type="match status" value="1"/>
</dbReference>
<dbReference type="SMART" id="SM00475">
    <property type="entry name" value="53EXOc"/>
    <property type="match status" value="1"/>
</dbReference>
<dbReference type="SMART" id="SM00279">
    <property type="entry name" value="HhH2"/>
    <property type="match status" value="1"/>
</dbReference>
<dbReference type="SUPFAM" id="SSF47807">
    <property type="entry name" value="5' to 3' exonuclease, C-terminal subdomain"/>
    <property type="match status" value="1"/>
</dbReference>
<dbReference type="SUPFAM" id="SSF88723">
    <property type="entry name" value="PIN domain-like"/>
    <property type="match status" value="1"/>
</dbReference>